<gene>
    <name type="primary">petA</name>
    <name type="ordered locus">RC0358</name>
</gene>
<organism>
    <name type="scientific">Rickettsia conorii (strain ATCC VR-613 / Malish 7)</name>
    <dbReference type="NCBI Taxonomy" id="272944"/>
    <lineage>
        <taxon>Bacteria</taxon>
        <taxon>Pseudomonadati</taxon>
        <taxon>Pseudomonadota</taxon>
        <taxon>Alphaproteobacteria</taxon>
        <taxon>Rickettsiales</taxon>
        <taxon>Rickettsiaceae</taxon>
        <taxon>Rickettsieae</taxon>
        <taxon>Rickettsia</taxon>
        <taxon>spotted fever group</taxon>
    </lineage>
</organism>
<feature type="chain" id="PRO_0000286642" description="Ubiquinol-cytochrome c reductase iron-sulfur subunit">
    <location>
        <begin position="1"/>
        <end position="177"/>
    </location>
</feature>
<feature type="transmembrane region" description="Helical" evidence="1">
    <location>
        <begin position="18"/>
        <end position="38"/>
    </location>
</feature>
<feature type="domain" description="Rieske" evidence="2">
    <location>
        <begin position="88"/>
        <end position="175"/>
    </location>
</feature>
<feature type="binding site" evidence="2">
    <location>
        <position position="120"/>
    </location>
    <ligand>
        <name>[2Fe-2S] cluster</name>
        <dbReference type="ChEBI" id="CHEBI:190135"/>
    </ligand>
</feature>
<feature type="binding site" evidence="2">
    <location>
        <position position="122"/>
    </location>
    <ligand>
        <name>[2Fe-2S] cluster</name>
        <dbReference type="ChEBI" id="CHEBI:190135"/>
    </ligand>
</feature>
<feature type="binding site" evidence="2">
    <location>
        <position position="139"/>
    </location>
    <ligand>
        <name>[2Fe-2S] cluster</name>
        <dbReference type="ChEBI" id="CHEBI:190135"/>
    </ligand>
</feature>
<feature type="binding site" evidence="2">
    <location>
        <position position="142"/>
    </location>
    <ligand>
        <name>[2Fe-2S] cluster</name>
        <dbReference type="ChEBI" id="CHEBI:190135"/>
    </ligand>
</feature>
<feature type="disulfide bond" evidence="2">
    <location>
        <begin position="125"/>
        <end position="141"/>
    </location>
</feature>
<name>UCRI_RICCN</name>
<keyword id="KW-0001">2Fe-2S</keyword>
<keyword id="KW-1003">Cell membrane</keyword>
<keyword id="KW-1015">Disulfide bond</keyword>
<keyword id="KW-0249">Electron transport</keyword>
<keyword id="KW-0408">Iron</keyword>
<keyword id="KW-0411">Iron-sulfur</keyword>
<keyword id="KW-0472">Membrane</keyword>
<keyword id="KW-0479">Metal-binding</keyword>
<keyword id="KW-1278">Translocase</keyword>
<keyword id="KW-0812">Transmembrane</keyword>
<keyword id="KW-1133">Transmembrane helix</keyword>
<keyword id="KW-0813">Transport</keyword>
<sequence length="177" mass="19211">MSDTEDNKNKQTTRRDFMVLTASSVAAIGAVCTLWPLVDSLNPSADVLALSSIEVDLSNIAVGQTVTVKWQGKPVFITNRTPDKIAEARAVKMSELIDPEADQARVKAGHDNWLVTIGICTHLGCVPLANQGEYDGWFCPCHGSQYDSSGRVRRGPAPLNLAVPPYTFISDKKIRIG</sequence>
<proteinExistence type="inferred from homology"/>
<accession>Q92IR2</accession>
<comment type="function">
    <text>Component of the ubiquinol-cytochrome c reductase complex (complex III or cytochrome b-c1 complex), which is a respiratory chain that generates an electrochemical potential coupled to ATP synthesis.</text>
</comment>
<comment type="catalytic activity">
    <reaction>
        <text>a quinol + 2 Fe(III)-[cytochrome c](out) = a quinone + 2 Fe(II)-[cytochrome c](out) + 2 H(+)(out)</text>
        <dbReference type="Rhea" id="RHEA:11484"/>
        <dbReference type="Rhea" id="RHEA-COMP:10350"/>
        <dbReference type="Rhea" id="RHEA-COMP:14399"/>
        <dbReference type="ChEBI" id="CHEBI:15378"/>
        <dbReference type="ChEBI" id="CHEBI:24646"/>
        <dbReference type="ChEBI" id="CHEBI:29033"/>
        <dbReference type="ChEBI" id="CHEBI:29034"/>
        <dbReference type="ChEBI" id="CHEBI:132124"/>
        <dbReference type="EC" id="7.1.1.8"/>
    </reaction>
</comment>
<comment type="cofactor">
    <cofactor evidence="2">
        <name>[2Fe-2S] cluster</name>
        <dbReference type="ChEBI" id="CHEBI:190135"/>
    </cofactor>
    <text evidence="2">Binds 1 [2Fe-2S] cluster per subunit.</text>
</comment>
<comment type="subunit">
    <text>The main subunits of complex b-c1 are: cytochrome b, cytochrome c1 and the Rieske protein.</text>
</comment>
<comment type="subcellular location">
    <subcellularLocation>
        <location evidence="3">Cell membrane</location>
        <topology evidence="3">Single-pass membrane protein</topology>
    </subcellularLocation>
</comment>
<comment type="miscellaneous">
    <text>The Rieske protein is a high potential 2Fe-2S protein.</text>
</comment>
<comment type="similarity">
    <text evidence="3">Belongs to the Rieske iron-sulfur protein family.</text>
</comment>
<evidence type="ECO:0000255" key="1"/>
<evidence type="ECO:0000255" key="2">
    <source>
        <dbReference type="PROSITE-ProRule" id="PRU00628"/>
    </source>
</evidence>
<evidence type="ECO:0000305" key="3"/>
<protein>
    <recommendedName>
        <fullName>Ubiquinol-cytochrome c reductase iron-sulfur subunit</fullName>
        <ecNumber>7.1.1.8</ecNumber>
    </recommendedName>
    <alternativeName>
        <fullName>Rieske iron-sulfur protein</fullName>
        <shortName>RISP</shortName>
    </alternativeName>
</protein>
<dbReference type="EC" id="7.1.1.8"/>
<dbReference type="EMBL" id="AE006914">
    <property type="protein sequence ID" value="AAL02896.1"/>
    <property type="molecule type" value="Genomic_DNA"/>
</dbReference>
<dbReference type="PIR" id="F97744">
    <property type="entry name" value="F97744"/>
</dbReference>
<dbReference type="RefSeq" id="WP_010977013.1">
    <property type="nucleotide sequence ID" value="NC_003103.1"/>
</dbReference>
<dbReference type="SMR" id="Q92IR2"/>
<dbReference type="GeneID" id="927519"/>
<dbReference type="KEGG" id="rco:RC0358"/>
<dbReference type="PATRIC" id="fig|272944.4.peg.407"/>
<dbReference type="HOGENOM" id="CLU_055690_0_2_5"/>
<dbReference type="Proteomes" id="UP000000816">
    <property type="component" value="Chromosome"/>
</dbReference>
<dbReference type="GO" id="GO:0005886">
    <property type="term" value="C:plasma membrane"/>
    <property type="evidence" value="ECO:0007669"/>
    <property type="project" value="UniProtKB-SubCell"/>
</dbReference>
<dbReference type="GO" id="GO:0051537">
    <property type="term" value="F:2 iron, 2 sulfur cluster binding"/>
    <property type="evidence" value="ECO:0007669"/>
    <property type="project" value="UniProtKB-KW"/>
</dbReference>
<dbReference type="GO" id="GO:0046872">
    <property type="term" value="F:metal ion binding"/>
    <property type="evidence" value="ECO:0007669"/>
    <property type="project" value="UniProtKB-KW"/>
</dbReference>
<dbReference type="GO" id="GO:0008121">
    <property type="term" value="F:ubiquinol-cytochrome-c reductase activity"/>
    <property type="evidence" value="ECO:0007669"/>
    <property type="project" value="UniProtKB-EC"/>
</dbReference>
<dbReference type="CDD" id="cd03470">
    <property type="entry name" value="Rieske_cytochrome_bc1"/>
    <property type="match status" value="1"/>
</dbReference>
<dbReference type="FunFam" id="2.102.10.10:FF:000001">
    <property type="entry name" value="Cytochrome b-c1 complex subunit Rieske, mitochondrial"/>
    <property type="match status" value="1"/>
</dbReference>
<dbReference type="Gene3D" id="2.102.10.10">
    <property type="entry name" value="Rieske [2Fe-2S] iron-sulphur domain"/>
    <property type="match status" value="1"/>
</dbReference>
<dbReference type="Gene3D" id="1.20.5.510">
    <property type="entry name" value="Single helix bin"/>
    <property type="match status" value="1"/>
</dbReference>
<dbReference type="InterPro" id="IPR017941">
    <property type="entry name" value="Rieske_2Fe-2S"/>
</dbReference>
<dbReference type="InterPro" id="IPR036922">
    <property type="entry name" value="Rieske_2Fe-2S_sf"/>
</dbReference>
<dbReference type="InterPro" id="IPR014349">
    <property type="entry name" value="Rieske_Fe-S_prot"/>
</dbReference>
<dbReference type="InterPro" id="IPR005805">
    <property type="entry name" value="Rieske_Fe-S_prot_C"/>
</dbReference>
<dbReference type="InterPro" id="IPR006311">
    <property type="entry name" value="TAT_signal"/>
</dbReference>
<dbReference type="InterPro" id="IPR019470">
    <property type="entry name" value="Ubiq_cytC_Rdtase_Fe-S_su_TAT"/>
</dbReference>
<dbReference type="InterPro" id="IPR006317">
    <property type="entry name" value="Ubiquinol_cyt_c_Rdtase_Fe-S-su"/>
</dbReference>
<dbReference type="NCBIfam" id="TIGR01416">
    <property type="entry name" value="Rieske_proteo"/>
    <property type="match status" value="1"/>
</dbReference>
<dbReference type="PANTHER" id="PTHR10134">
    <property type="entry name" value="CYTOCHROME B-C1 COMPLEX SUBUNIT RIESKE, MITOCHONDRIAL"/>
    <property type="match status" value="1"/>
</dbReference>
<dbReference type="Pfam" id="PF00355">
    <property type="entry name" value="Rieske"/>
    <property type="match status" value="1"/>
</dbReference>
<dbReference type="Pfam" id="PF10399">
    <property type="entry name" value="UCR_Fe-S_N"/>
    <property type="match status" value="1"/>
</dbReference>
<dbReference type="PRINTS" id="PR00162">
    <property type="entry name" value="RIESKE"/>
</dbReference>
<dbReference type="SUPFAM" id="SSF50022">
    <property type="entry name" value="ISP domain"/>
    <property type="match status" value="1"/>
</dbReference>
<dbReference type="PROSITE" id="PS51296">
    <property type="entry name" value="RIESKE"/>
    <property type="match status" value="1"/>
</dbReference>
<dbReference type="PROSITE" id="PS51318">
    <property type="entry name" value="TAT"/>
    <property type="match status" value="1"/>
</dbReference>
<reference key="1">
    <citation type="journal article" date="2001" name="Science">
        <title>Mechanisms of evolution in Rickettsia conorii and R. prowazekii.</title>
        <authorList>
            <person name="Ogata H."/>
            <person name="Audic S."/>
            <person name="Renesto-Audiffren P."/>
            <person name="Fournier P.-E."/>
            <person name="Barbe V."/>
            <person name="Samson D."/>
            <person name="Roux V."/>
            <person name="Cossart P."/>
            <person name="Weissenbach J."/>
            <person name="Claverie J.-M."/>
            <person name="Raoult D."/>
        </authorList>
    </citation>
    <scope>NUCLEOTIDE SEQUENCE [LARGE SCALE GENOMIC DNA]</scope>
    <source>
        <strain>ATCC VR-613 / Malish 7</strain>
    </source>
</reference>